<feature type="chain" id="PRO_0000382226" description="Histone-arginine methyltransferase CARMER">
    <location>
        <begin position="1"/>
        <end position="531"/>
    </location>
</feature>
<feature type="domain" description="SAM-dependent MTase PRMT-type" evidence="5">
    <location>
        <begin position="141"/>
        <end position="450"/>
    </location>
</feature>
<feature type="binding site" evidence="2">
    <location>
        <position position="154"/>
    </location>
    <ligand>
        <name>S-adenosyl-L-methionine</name>
        <dbReference type="ChEBI" id="CHEBI:59789"/>
    </ligand>
</feature>
<feature type="binding site" evidence="2">
    <location>
        <position position="163"/>
    </location>
    <ligand>
        <name>S-adenosyl-L-methionine</name>
        <dbReference type="ChEBI" id="CHEBI:59789"/>
    </ligand>
</feature>
<feature type="binding site" evidence="2">
    <location>
        <position position="187"/>
    </location>
    <ligand>
        <name>S-adenosyl-L-methionine</name>
        <dbReference type="ChEBI" id="CHEBI:59789"/>
    </ligand>
</feature>
<feature type="binding site" evidence="2">
    <location>
        <position position="209"/>
    </location>
    <ligand>
        <name>S-adenosyl-L-methionine</name>
        <dbReference type="ChEBI" id="CHEBI:59789"/>
    </ligand>
</feature>
<feature type="binding site" evidence="2">
    <location>
        <position position="238"/>
    </location>
    <ligand>
        <name>S-adenosyl-L-methionine</name>
        <dbReference type="ChEBI" id="CHEBI:59789"/>
    </ligand>
</feature>
<feature type="binding site" evidence="1">
    <location>
        <position position="266"/>
    </location>
    <ligand>
        <name>S-adenosyl-L-methionine</name>
        <dbReference type="ChEBI" id="CHEBI:59789"/>
    </ligand>
</feature>
<feature type="modified residue" description="Asymmetric dimethylarginine; by autocatalysis" evidence="3">
    <location>
        <position position="501"/>
    </location>
</feature>
<evidence type="ECO:0000250" key="1"/>
<evidence type="ECO:0000250" key="2">
    <source>
        <dbReference type="UniProtKB" id="Q63009"/>
    </source>
</evidence>
<evidence type="ECO:0000250" key="3">
    <source>
        <dbReference type="UniProtKB" id="Q7Q2B7"/>
    </source>
</evidence>
<evidence type="ECO:0000250" key="4">
    <source>
        <dbReference type="UniProtKB" id="Q9VH48"/>
    </source>
</evidence>
<evidence type="ECO:0000255" key="5">
    <source>
        <dbReference type="PROSITE-ProRule" id="PRU01015"/>
    </source>
</evidence>
<evidence type="ECO:0000312" key="6">
    <source>
        <dbReference type="EMBL" id="EAL27136.1"/>
    </source>
</evidence>
<dbReference type="EC" id="2.1.1.319" evidence="3"/>
<dbReference type="EMBL" id="CM000070">
    <property type="protein sequence ID" value="EAL27136.1"/>
    <property type="molecule type" value="Genomic_DNA"/>
</dbReference>
<dbReference type="RefSeq" id="XP_001357999.1">
    <property type="nucleotide sequence ID" value="XM_001357962.4"/>
</dbReference>
<dbReference type="SMR" id="Q29B63"/>
<dbReference type="FunCoup" id="Q29B63">
    <property type="interactions" value="2459"/>
</dbReference>
<dbReference type="STRING" id="46245.Q29B63"/>
<dbReference type="EnsemblMetazoa" id="FBtr0284945">
    <property type="protein sequence ID" value="FBpp0283383"/>
    <property type="gene ID" value="FBgn0078823"/>
</dbReference>
<dbReference type="GeneID" id="4800786"/>
<dbReference type="KEGG" id="dpo:4800786"/>
<dbReference type="CTD" id="420"/>
<dbReference type="eggNOG" id="KOG1500">
    <property type="taxonomic scope" value="Eukaryota"/>
</dbReference>
<dbReference type="HOGENOM" id="CLU_017375_0_1_1"/>
<dbReference type="InParanoid" id="Q29B63"/>
<dbReference type="OMA" id="GIGDGMD"/>
<dbReference type="PhylomeDB" id="Q29B63"/>
<dbReference type="Proteomes" id="UP000001819">
    <property type="component" value="Chromosome 2"/>
</dbReference>
<dbReference type="Bgee" id="FBgn0078823">
    <property type="expression patterns" value="Expressed in female reproductive system and 2 other cell types or tissues"/>
</dbReference>
<dbReference type="GO" id="GO:0005737">
    <property type="term" value="C:cytoplasm"/>
    <property type="evidence" value="ECO:0000250"/>
    <property type="project" value="UniProtKB"/>
</dbReference>
<dbReference type="GO" id="GO:0005634">
    <property type="term" value="C:nucleus"/>
    <property type="evidence" value="ECO:0000250"/>
    <property type="project" value="UniProtKB"/>
</dbReference>
<dbReference type="GO" id="GO:0035642">
    <property type="term" value="F:histone H3R17 methyltransferase activity"/>
    <property type="evidence" value="ECO:0000250"/>
    <property type="project" value="UniProtKB"/>
</dbReference>
<dbReference type="GO" id="GO:0070611">
    <property type="term" value="F:histone H3R2 methyltransferase activity"/>
    <property type="evidence" value="ECO:0000250"/>
    <property type="project" value="UniProtKB"/>
</dbReference>
<dbReference type="GO" id="GO:0140903">
    <property type="term" value="F:histone H3R26 methyltransferase activity"/>
    <property type="evidence" value="ECO:0000250"/>
    <property type="project" value="UniProtKB"/>
</dbReference>
<dbReference type="GO" id="GO:0035242">
    <property type="term" value="F:protein-arginine omega-N asymmetric methyltransferase activity"/>
    <property type="evidence" value="ECO:0000250"/>
    <property type="project" value="UniProtKB"/>
</dbReference>
<dbReference type="GO" id="GO:0035241">
    <property type="term" value="F:protein-arginine omega-N monomethyltransferase activity"/>
    <property type="evidence" value="ECO:0000250"/>
    <property type="project" value="UniProtKB"/>
</dbReference>
<dbReference type="GO" id="GO:0006338">
    <property type="term" value="P:chromatin remodeling"/>
    <property type="evidence" value="ECO:0000250"/>
    <property type="project" value="UniProtKB"/>
</dbReference>
<dbReference type="GO" id="GO:0019919">
    <property type="term" value="P:peptidyl-arginine methylation, to asymmetrical-dimethyl arginine"/>
    <property type="evidence" value="ECO:0000250"/>
    <property type="project" value="UniProtKB"/>
</dbReference>
<dbReference type="GO" id="GO:0006355">
    <property type="term" value="P:regulation of DNA-templated transcription"/>
    <property type="evidence" value="ECO:0000250"/>
    <property type="project" value="UniProtKB"/>
</dbReference>
<dbReference type="CDD" id="cd02440">
    <property type="entry name" value="AdoMet_MTases"/>
    <property type="match status" value="1"/>
</dbReference>
<dbReference type="FunFam" id="2.30.29.30:FF:000449">
    <property type="entry name" value="Histone-arginine methyltransferase CARMER"/>
    <property type="match status" value="1"/>
</dbReference>
<dbReference type="FunFam" id="2.70.160.11:FF:000002">
    <property type="entry name" value="Probable histone-arginine methyltransferase CARM1"/>
    <property type="match status" value="1"/>
</dbReference>
<dbReference type="FunFam" id="3.40.50.150:FF:000031">
    <property type="entry name" value="Putative Histone-arginine methyltransferase CARM1"/>
    <property type="match status" value="1"/>
</dbReference>
<dbReference type="Gene3D" id="2.70.160.11">
    <property type="entry name" value="Hnrnp arginine n-methyltransferase1"/>
    <property type="match status" value="1"/>
</dbReference>
<dbReference type="Gene3D" id="2.30.29.30">
    <property type="entry name" value="Pleckstrin-homology domain (PH domain)/Phosphotyrosine-binding domain (PTB)"/>
    <property type="match status" value="1"/>
</dbReference>
<dbReference type="Gene3D" id="3.40.50.150">
    <property type="entry name" value="Vaccinia Virus protein VP39"/>
    <property type="match status" value="1"/>
</dbReference>
<dbReference type="InterPro" id="IPR025799">
    <property type="entry name" value="Arg_MeTrfase"/>
</dbReference>
<dbReference type="InterPro" id="IPR011993">
    <property type="entry name" value="PH-like_dom_sf"/>
</dbReference>
<dbReference type="InterPro" id="IPR055135">
    <property type="entry name" value="PRMT_dom"/>
</dbReference>
<dbReference type="InterPro" id="IPR029063">
    <property type="entry name" value="SAM-dependent_MTases_sf"/>
</dbReference>
<dbReference type="PANTHER" id="PTHR11006:SF10">
    <property type="entry name" value="HISTONE-ARGININE METHYLTRANSFERASE CARMER-RELATED"/>
    <property type="match status" value="1"/>
</dbReference>
<dbReference type="PANTHER" id="PTHR11006">
    <property type="entry name" value="PROTEIN ARGININE N-METHYLTRANSFERASE"/>
    <property type="match status" value="1"/>
</dbReference>
<dbReference type="Pfam" id="PF06325">
    <property type="entry name" value="PrmA"/>
    <property type="match status" value="1"/>
</dbReference>
<dbReference type="Pfam" id="PF22528">
    <property type="entry name" value="PRMT_C"/>
    <property type="match status" value="1"/>
</dbReference>
<dbReference type="SUPFAM" id="SSF53335">
    <property type="entry name" value="S-adenosyl-L-methionine-dependent methyltransferases"/>
    <property type="match status" value="1"/>
</dbReference>
<dbReference type="PROSITE" id="PS51678">
    <property type="entry name" value="SAM_MT_PRMT"/>
    <property type="match status" value="1"/>
</dbReference>
<protein>
    <recommendedName>
        <fullName evidence="3">Histone-arginine methyltransferase CARMER</fullName>
        <ecNumber evidence="3">2.1.1.319</ecNumber>
    </recommendedName>
</protein>
<comment type="function">
    <text evidence="3">Methylates (mono- and asymmetric dimethylation) the guanidino nitrogens of arginyl residues in proteins. May methylate histone H3 at 'Arg-17' and activate transcription via chromatin remodeling (By similarity).</text>
</comment>
<comment type="catalytic activity">
    <reaction evidence="3">
        <text>L-arginyl-[protein] + 2 S-adenosyl-L-methionine = N(omega),N(omega)-dimethyl-L-arginyl-[protein] + 2 S-adenosyl-L-homocysteine + 2 H(+)</text>
        <dbReference type="Rhea" id="RHEA:48096"/>
        <dbReference type="Rhea" id="RHEA-COMP:10532"/>
        <dbReference type="Rhea" id="RHEA-COMP:11991"/>
        <dbReference type="ChEBI" id="CHEBI:15378"/>
        <dbReference type="ChEBI" id="CHEBI:29965"/>
        <dbReference type="ChEBI" id="CHEBI:57856"/>
        <dbReference type="ChEBI" id="CHEBI:59789"/>
        <dbReference type="ChEBI" id="CHEBI:61897"/>
        <dbReference type="EC" id="2.1.1.319"/>
    </reaction>
</comment>
<comment type="subunit">
    <text evidence="1">Homodimer.</text>
</comment>
<comment type="subcellular location">
    <subcellularLocation>
        <location evidence="4">Cytoplasm</location>
    </subcellularLocation>
    <subcellularLocation>
        <location evidence="4">Nucleus</location>
    </subcellularLocation>
</comment>
<comment type="PTM">
    <text evidence="1">The dimethylated protein is the major form.</text>
</comment>
<comment type="similarity">
    <text evidence="5">Belongs to the class I-like SAM-binding methyltransferase superfamily. Protein arginine N-methyltransferase family.</text>
</comment>
<sequence length="531" mass="59896">MSTPRPEEHQKFSAAAALCPLSNCQFSGVVISAIADEQKLEFTNKYKGSCTLLCSYDSQGIVLRIVLDADREHVLKEYMIAADTDAAQMGRRSYAVTLESDNLVLRFASDQDQQLFRKVVENVKHLRPKSVFSQRTEESSASQYFQFYGYLSQQQNMMQDYVRTSTYQRAILGNAVDFQDKIVLDVGAGSGILSFFAVQAGAAKVYAIEASNMAQYAQQLVESNNVQHKISVIPGKIEEIELPEKVDVIISEPMGYMLYNERMLETYLHARKWLKPNGKMYPTHGDLHIAPFSDESLYSEQYNKANFWYQSAFHGVDLTTLHKEGMKEYFRQPIVDTFDIRICMAKSVRHVCDFLNDKEDDLHLIDIPLEFQILQTGICHGLAFWFDVEFSGSSQNVWLSTSPTAPLTHWYQVRCLLPMPIFIKQGQTLTGRVLLEANRRQSYDVTIDLHIEGTLISSSNTLDLKNPYFRYTGAPVQAPPGTSTQSPSEQYWTQVDTQGSRNSSSMLNGGLGVNGIGDGSMDITHGLMHPH</sequence>
<name>CARM1_DROPS</name>
<reference evidence="6" key="1">
    <citation type="journal article" date="2005" name="Genome Res.">
        <title>Comparative genome sequencing of Drosophila pseudoobscura: chromosomal, gene, and cis-element evolution.</title>
        <authorList>
            <person name="Richards S."/>
            <person name="Liu Y."/>
            <person name="Bettencourt B.R."/>
            <person name="Hradecky P."/>
            <person name="Letovsky S."/>
            <person name="Nielsen R."/>
            <person name="Thornton K."/>
            <person name="Hubisz M.J."/>
            <person name="Chen R."/>
            <person name="Meisel R.P."/>
            <person name="Couronne O."/>
            <person name="Hua S."/>
            <person name="Smith M.A."/>
            <person name="Zhang P."/>
            <person name="Liu J."/>
            <person name="Bussemaker H.J."/>
            <person name="van Batenburg M.F."/>
            <person name="Howells S.L."/>
            <person name="Scherer S.E."/>
            <person name="Sodergren E."/>
            <person name="Matthews B.B."/>
            <person name="Crosby M.A."/>
            <person name="Schroeder A.J."/>
            <person name="Ortiz-Barrientos D."/>
            <person name="Rives C.M."/>
            <person name="Metzker M.L."/>
            <person name="Muzny D.M."/>
            <person name="Scott G."/>
            <person name="Steffen D."/>
            <person name="Wheeler D.A."/>
            <person name="Worley K.C."/>
            <person name="Havlak P."/>
            <person name="Durbin K.J."/>
            <person name="Egan A."/>
            <person name="Gill R."/>
            <person name="Hume J."/>
            <person name="Morgan M.B."/>
            <person name="Miner G."/>
            <person name="Hamilton C."/>
            <person name="Huang Y."/>
            <person name="Waldron L."/>
            <person name="Verduzco D."/>
            <person name="Clerc-Blankenburg K.P."/>
            <person name="Dubchak I."/>
            <person name="Noor M.A.F."/>
            <person name="Anderson W."/>
            <person name="White K.P."/>
            <person name="Clark A.G."/>
            <person name="Schaeffer S.W."/>
            <person name="Gelbart W.M."/>
            <person name="Weinstock G.M."/>
            <person name="Gibbs R.A."/>
        </authorList>
    </citation>
    <scope>NUCLEOTIDE SEQUENCE [LARGE SCALE GENOMIC DNA]</scope>
    <source>
        <strain>MV2-25 / Tucson 14011-0121.94</strain>
    </source>
</reference>
<organism>
    <name type="scientific">Drosophila pseudoobscura pseudoobscura</name>
    <name type="common">Fruit fly</name>
    <dbReference type="NCBI Taxonomy" id="46245"/>
    <lineage>
        <taxon>Eukaryota</taxon>
        <taxon>Metazoa</taxon>
        <taxon>Ecdysozoa</taxon>
        <taxon>Arthropoda</taxon>
        <taxon>Hexapoda</taxon>
        <taxon>Insecta</taxon>
        <taxon>Pterygota</taxon>
        <taxon>Neoptera</taxon>
        <taxon>Endopterygota</taxon>
        <taxon>Diptera</taxon>
        <taxon>Brachycera</taxon>
        <taxon>Muscomorpha</taxon>
        <taxon>Ephydroidea</taxon>
        <taxon>Drosophilidae</taxon>
        <taxon>Drosophila</taxon>
        <taxon>Sophophora</taxon>
    </lineage>
</organism>
<accession>Q29B63</accession>
<gene>
    <name type="primary">Art4</name>
    <name type="ORF">GA18823</name>
</gene>
<proteinExistence type="inferred from homology"/>
<keyword id="KW-0156">Chromatin regulator</keyword>
<keyword id="KW-0963">Cytoplasm</keyword>
<keyword id="KW-0488">Methylation</keyword>
<keyword id="KW-0489">Methyltransferase</keyword>
<keyword id="KW-0539">Nucleus</keyword>
<keyword id="KW-1185">Reference proteome</keyword>
<keyword id="KW-0949">S-adenosyl-L-methionine</keyword>
<keyword id="KW-0804">Transcription</keyword>
<keyword id="KW-0805">Transcription regulation</keyword>
<keyword id="KW-0808">Transferase</keyword>